<reference key="1">
    <citation type="submission" date="1997-03" db="EMBL/GenBank/DDBJ databases">
        <title>A 148 kbp sequence of the region between 35 and 47 degree of the Bacillus subtilis genome.</title>
        <authorList>
            <person name="Kasahara Y."/>
            <person name="Nakai S."/>
            <person name="Lee S."/>
            <person name="Sadaie Y."/>
            <person name="Ogasawara N."/>
        </authorList>
    </citation>
    <scope>NUCLEOTIDE SEQUENCE [GENOMIC DNA]</scope>
    <source>
        <strain>168</strain>
    </source>
</reference>
<reference key="2">
    <citation type="journal article" date="1997" name="Nature">
        <title>The complete genome sequence of the Gram-positive bacterium Bacillus subtilis.</title>
        <authorList>
            <person name="Kunst F."/>
            <person name="Ogasawara N."/>
            <person name="Moszer I."/>
            <person name="Albertini A.M."/>
            <person name="Alloni G."/>
            <person name="Azevedo V."/>
            <person name="Bertero M.G."/>
            <person name="Bessieres P."/>
            <person name="Bolotin A."/>
            <person name="Borchert S."/>
            <person name="Borriss R."/>
            <person name="Boursier L."/>
            <person name="Brans A."/>
            <person name="Braun M."/>
            <person name="Brignell S.C."/>
            <person name="Bron S."/>
            <person name="Brouillet S."/>
            <person name="Bruschi C.V."/>
            <person name="Caldwell B."/>
            <person name="Capuano V."/>
            <person name="Carter N.M."/>
            <person name="Choi S.-K."/>
            <person name="Codani J.-J."/>
            <person name="Connerton I.F."/>
            <person name="Cummings N.J."/>
            <person name="Daniel R.A."/>
            <person name="Denizot F."/>
            <person name="Devine K.M."/>
            <person name="Duesterhoeft A."/>
            <person name="Ehrlich S.D."/>
            <person name="Emmerson P.T."/>
            <person name="Entian K.-D."/>
            <person name="Errington J."/>
            <person name="Fabret C."/>
            <person name="Ferrari E."/>
            <person name="Foulger D."/>
            <person name="Fritz C."/>
            <person name="Fujita M."/>
            <person name="Fujita Y."/>
            <person name="Fuma S."/>
            <person name="Galizzi A."/>
            <person name="Galleron N."/>
            <person name="Ghim S.-Y."/>
            <person name="Glaser P."/>
            <person name="Goffeau A."/>
            <person name="Golightly E.J."/>
            <person name="Grandi G."/>
            <person name="Guiseppi G."/>
            <person name="Guy B.J."/>
            <person name="Haga K."/>
            <person name="Haiech J."/>
            <person name="Harwood C.R."/>
            <person name="Henaut A."/>
            <person name="Hilbert H."/>
            <person name="Holsappel S."/>
            <person name="Hosono S."/>
            <person name="Hullo M.-F."/>
            <person name="Itaya M."/>
            <person name="Jones L.-M."/>
            <person name="Joris B."/>
            <person name="Karamata D."/>
            <person name="Kasahara Y."/>
            <person name="Klaerr-Blanchard M."/>
            <person name="Klein C."/>
            <person name="Kobayashi Y."/>
            <person name="Koetter P."/>
            <person name="Koningstein G."/>
            <person name="Krogh S."/>
            <person name="Kumano M."/>
            <person name="Kurita K."/>
            <person name="Lapidus A."/>
            <person name="Lardinois S."/>
            <person name="Lauber J."/>
            <person name="Lazarevic V."/>
            <person name="Lee S.-M."/>
            <person name="Levine A."/>
            <person name="Liu H."/>
            <person name="Masuda S."/>
            <person name="Mauel C."/>
            <person name="Medigue C."/>
            <person name="Medina N."/>
            <person name="Mellado R.P."/>
            <person name="Mizuno M."/>
            <person name="Moestl D."/>
            <person name="Nakai S."/>
            <person name="Noback M."/>
            <person name="Noone D."/>
            <person name="O'Reilly M."/>
            <person name="Ogawa K."/>
            <person name="Ogiwara A."/>
            <person name="Oudega B."/>
            <person name="Park S.-H."/>
            <person name="Parro V."/>
            <person name="Pohl T.M."/>
            <person name="Portetelle D."/>
            <person name="Porwollik S."/>
            <person name="Prescott A.M."/>
            <person name="Presecan E."/>
            <person name="Pujic P."/>
            <person name="Purnelle B."/>
            <person name="Rapoport G."/>
            <person name="Rey M."/>
            <person name="Reynolds S."/>
            <person name="Rieger M."/>
            <person name="Rivolta C."/>
            <person name="Rocha E."/>
            <person name="Roche B."/>
            <person name="Rose M."/>
            <person name="Sadaie Y."/>
            <person name="Sato T."/>
            <person name="Scanlan E."/>
            <person name="Schleich S."/>
            <person name="Schroeter R."/>
            <person name="Scoffone F."/>
            <person name="Sekiguchi J."/>
            <person name="Sekowska A."/>
            <person name="Seror S.J."/>
            <person name="Serror P."/>
            <person name="Shin B.-S."/>
            <person name="Soldo B."/>
            <person name="Sorokin A."/>
            <person name="Tacconi E."/>
            <person name="Takagi T."/>
            <person name="Takahashi H."/>
            <person name="Takemaru K."/>
            <person name="Takeuchi M."/>
            <person name="Tamakoshi A."/>
            <person name="Tanaka T."/>
            <person name="Terpstra P."/>
            <person name="Tognoni A."/>
            <person name="Tosato V."/>
            <person name="Uchiyama S."/>
            <person name="Vandenbol M."/>
            <person name="Vannier F."/>
            <person name="Vassarotti A."/>
            <person name="Viari A."/>
            <person name="Wambutt R."/>
            <person name="Wedler E."/>
            <person name="Wedler H."/>
            <person name="Weitzenegger T."/>
            <person name="Winters P."/>
            <person name="Wipat A."/>
            <person name="Yamamoto H."/>
            <person name="Yamane K."/>
            <person name="Yasumoto K."/>
            <person name="Yata K."/>
            <person name="Yoshida K."/>
            <person name="Yoshikawa H.-F."/>
            <person name="Zumstein E."/>
            <person name="Yoshikawa H."/>
            <person name="Danchin A."/>
        </authorList>
    </citation>
    <scope>NUCLEOTIDE SEQUENCE [LARGE SCALE GENOMIC DNA]</scope>
    <source>
        <strain>168</strain>
    </source>
</reference>
<reference key="3">
    <citation type="journal article" date="2004" name="Acta Crystallogr. D">
        <title>Harvesting the high-hanging fruit: the structure of the YdeN gene product from Bacillus subtilis at 1.8 Angstroms resolution.</title>
        <authorList>
            <person name="Janda I."/>
            <person name="Devedjiev Y."/>
            <person name="Cooper D."/>
            <person name="Chruszcz M."/>
            <person name="Derewenda U."/>
            <person name="Gabrys A."/>
            <person name="Minor W."/>
            <person name="Joachimiak A."/>
            <person name="Derewenda Z.S."/>
        </authorList>
    </citation>
    <scope>X-RAY CRYSTALLOGRAPHY (1.8 ANGSTROMS)</scope>
    <scope>PUTATIVE ACTIVE SITE</scope>
</reference>
<feature type="chain" id="PRO_0000360180" description="Putative hydrolase YdeN">
    <location>
        <begin position="1"/>
        <end position="190"/>
    </location>
</feature>
<feature type="active site" description="Charge relay system" evidence="1">
    <location>
        <position position="71"/>
    </location>
</feature>
<feature type="active site" description="Charge relay system" evidence="1">
    <location>
        <position position="137"/>
    </location>
</feature>
<feature type="active site" description="Charge relay system" evidence="1">
    <location>
        <position position="164"/>
    </location>
</feature>
<feature type="strand" evidence="3">
    <location>
        <begin position="4"/>
        <end position="8"/>
    </location>
</feature>
<feature type="helix" evidence="3">
    <location>
        <begin position="20"/>
        <end position="29"/>
    </location>
</feature>
<feature type="strand" evidence="3">
    <location>
        <begin position="33"/>
        <end position="37"/>
    </location>
</feature>
<feature type="helix" evidence="3">
    <location>
        <begin position="47"/>
        <end position="55"/>
    </location>
</feature>
<feature type="helix" evidence="3">
    <location>
        <begin position="56"/>
        <end position="60"/>
    </location>
</feature>
<feature type="strand" evidence="3">
    <location>
        <begin position="65"/>
        <end position="70"/>
    </location>
</feature>
<feature type="helix" evidence="3">
    <location>
        <begin position="73"/>
        <end position="82"/>
    </location>
</feature>
<feature type="strand" evidence="3">
    <location>
        <begin position="90"/>
        <end position="96"/>
    </location>
</feature>
<feature type="helix" evidence="3">
    <location>
        <begin position="107"/>
        <end position="112"/>
    </location>
</feature>
<feature type="helix" evidence="3">
    <location>
        <begin position="119"/>
        <end position="125"/>
    </location>
</feature>
<feature type="strand" evidence="3">
    <location>
        <begin position="126"/>
        <end position="134"/>
    </location>
</feature>
<feature type="strand" evidence="3">
    <location>
        <begin position="138"/>
        <end position="140"/>
    </location>
</feature>
<feature type="helix" evidence="3">
    <location>
        <begin position="142"/>
        <end position="151"/>
    </location>
</feature>
<feature type="strand" evidence="3">
    <location>
        <begin position="155"/>
        <end position="159"/>
    </location>
</feature>
<feature type="helix" evidence="3">
    <location>
        <begin position="167"/>
        <end position="169"/>
    </location>
</feature>
<feature type="helix" evidence="3">
    <location>
        <begin position="175"/>
        <end position="186"/>
    </location>
</feature>
<accession>P96671</accession>
<accession>Q797H7</accession>
<dbReference type="EC" id="3.-.-.-"/>
<dbReference type="EMBL" id="AB001488">
    <property type="protein sequence ID" value="BAA19361.1"/>
    <property type="molecule type" value="Genomic_DNA"/>
</dbReference>
<dbReference type="EMBL" id="AL009126">
    <property type="protein sequence ID" value="CAB12333.1"/>
    <property type="molecule type" value="Genomic_DNA"/>
</dbReference>
<dbReference type="PIR" id="H69778">
    <property type="entry name" value="H69778"/>
</dbReference>
<dbReference type="RefSeq" id="NP_388407.1">
    <property type="nucleotide sequence ID" value="NC_000964.3"/>
</dbReference>
<dbReference type="RefSeq" id="WP_003234219.1">
    <property type="nucleotide sequence ID" value="NZ_OZ025638.1"/>
</dbReference>
<dbReference type="PDB" id="1UXO">
    <property type="method" value="X-ray"/>
    <property type="resolution" value="1.80 A"/>
    <property type="chains" value="A=2-190"/>
</dbReference>
<dbReference type="PDBsum" id="1UXO"/>
<dbReference type="SMR" id="P96671"/>
<dbReference type="FunCoup" id="P96671">
    <property type="interactions" value="51"/>
</dbReference>
<dbReference type="STRING" id="224308.BSU05260"/>
<dbReference type="ESTHER" id="bacsu-YDEN">
    <property type="family name" value="Hydrolase_RBBP9_YdeN"/>
</dbReference>
<dbReference type="PaxDb" id="224308-BSU05260"/>
<dbReference type="DNASU" id="939908"/>
<dbReference type="EnsemblBacteria" id="CAB12333">
    <property type="protein sequence ID" value="CAB12333"/>
    <property type="gene ID" value="BSU_05260"/>
</dbReference>
<dbReference type="GeneID" id="939908"/>
<dbReference type="KEGG" id="bsu:BSU05260"/>
<dbReference type="PATRIC" id="fig|224308.179.peg.561"/>
<dbReference type="eggNOG" id="COG3545">
    <property type="taxonomic scope" value="Bacteria"/>
</dbReference>
<dbReference type="InParanoid" id="P96671"/>
<dbReference type="OrthoDB" id="9804993at2"/>
<dbReference type="PhylomeDB" id="P96671"/>
<dbReference type="BioCyc" id="BSUB:BSU05260-MONOMER"/>
<dbReference type="EvolutionaryTrace" id="P96671"/>
<dbReference type="Proteomes" id="UP000001570">
    <property type="component" value="Chromosome"/>
</dbReference>
<dbReference type="GO" id="GO:0016787">
    <property type="term" value="F:hydrolase activity"/>
    <property type="evidence" value="ECO:0007669"/>
    <property type="project" value="UniProtKB-KW"/>
</dbReference>
<dbReference type="Gene3D" id="3.40.50.1820">
    <property type="entry name" value="alpha/beta hydrolase"/>
    <property type="match status" value="1"/>
</dbReference>
<dbReference type="InterPro" id="IPR029058">
    <property type="entry name" value="AB_hydrolase_fold"/>
</dbReference>
<dbReference type="InterPro" id="IPR010662">
    <property type="entry name" value="Hydrolase_RBBP9/YdeN"/>
</dbReference>
<dbReference type="InterPro" id="IPR052581">
    <property type="entry name" value="RBBP9"/>
</dbReference>
<dbReference type="PANTHER" id="PTHR15394">
    <property type="entry name" value="SERINE HYDROLASE RBBP9"/>
    <property type="match status" value="1"/>
</dbReference>
<dbReference type="PANTHER" id="PTHR15394:SF3">
    <property type="entry name" value="SERINE HYDROLASE RBBP9"/>
    <property type="match status" value="1"/>
</dbReference>
<dbReference type="Pfam" id="PF06821">
    <property type="entry name" value="Ser_hydrolase"/>
    <property type="match status" value="1"/>
</dbReference>
<dbReference type="SUPFAM" id="SSF53474">
    <property type="entry name" value="alpha/beta-Hydrolases"/>
    <property type="match status" value="1"/>
</dbReference>
<gene>
    <name type="primary">ydeN</name>
    <name type="ordered locus">BSU05260</name>
</gene>
<comment type="similarity">
    <text evidence="2">Belongs to the RBBP9 family.</text>
</comment>
<organism>
    <name type="scientific">Bacillus subtilis (strain 168)</name>
    <dbReference type="NCBI Taxonomy" id="224308"/>
    <lineage>
        <taxon>Bacteria</taxon>
        <taxon>Bacillati</taxon>
        <taxon>Bacillota</taxon>
        <taxon>Bacilli</taxon>
        <taxon>Bacillales</taxon>
        <taxon>Bacillaceae</taxon>
        <taxon>Bacillus</taxon>
    </lineage>
</organism>
<evidence type="ECO:0000255" key="1"/>
<evidence type="ECO:0000305" key="2"/>
<evidence type="ECO:0007829" key="3">
    <source>
        <dbReference type="PDB" id="1UXO"/>
    </source>
</evidence>
<protein>
    <recommendedName>
        <fullName>Putative hydrolase YdeN</fullName>
        <ecNumber>3.-.-.-</ecNumber>
    </recommendedName>
</protein>
<sequence>MTKQVYIIHGYRASSTNHWFPWLKKRLLADGVQADILNMPNPLQPRLEDWLDTLSLYQHTLHENTYLVAHSLGCPAILRFLEHLQLRKQLGGIILVSGFAKSLPTLQMLDEFTQGSFDHQKIIESAKHRAVIASKDDQIVPFSFSKDLAQQIDAALYEVQHGGHFLEDEGFTSLPIVYDVLTSYFSKETR</sequence>
<proteinExistence type="evidence at protein level"/>
<keyword id="KW-0002">3D-structure</keyword>
<keyword id="KW-0378">Hydrolase</keyword>
<keyword id="KW-1185">Reference proteome</keyword>
<name>YDEN_BACSU</name>